<comment type="function">
    <text evidence="1 3 4 5">Involved in the fragmentation of the mitochondrial network (By similarity). Involved in perinuclear clustering of the mitochondrial network (By similarity). May act, redundantly with fis-1, downstream of mitochondrial fission, before the fission products participate in mitochondrial homeostasis, mitophagy, or apoptosis (PubMed:24196833). Plays a role in apoptosis by promoting mitochondrial elimination and cell-death execution, acting downstream of caspase ced-3, and perhaps independently of dynamin GTPase drp-1, caspase ced-9 and apoptosis-inducing factor AIFM/wah-1 (PubMed:18722182).</text>
</comment>
<comment type="subcellular location">
    <subcellularLocation>
        <location evidence="1">Mitochondrion outer membrane</location>
        <topology evidence="1">Single-pass membrane protein</topology>
    </subcellularLocation>
    <subcellularLocation>
        <location evidence="1">Peroxisome membrane</location>
        <topology evidence="1">Single-pass membrane protein</topology>
    </subcellularLocation>
    <subcellularLocation>
        <location evidence="4">Mitochondrion</location>
    </subcellularLocation>
</comment>
<comment type="domain">
    <text evidence="1">The C-terminus is required for mitochondrial or peroxisomal localization, while the N-terminus is necessary for mitochondrial or peroxisomal fission.</text>
</comment>
<comment type="disruption phenotype">
    <text evidence="4">Mitochondrial connectivity appears normal and also normal in a fis-1 mutant background (PubMed:18722182). Abnormal, but minor, affects on apoptosis, with fewer cell corpses and an increase in cell numbers in a caspase ced-3, ced-4, or dynamin GTPase drp-1 mutant background (PubMed:18722182). Increases number of ectopic cells in a combined ced-3 and drp-1 mutant background (PubMed:18722182). Increases number of ectopic cells in a combined ced-3; ced-9 mutant background, which increases further in a ced-3; ced-9; drp-1 mutant background (PubMed:18722182). Larger number of mitochondria, and little reduction in mitochondria area index, in cell corpses in a ced-1 mutant background (PubMed:18722182).</text>
</comment>
<comment type="similarity">
    <text evidence="3 6">Belongs to the FIS1 family.</text>
</comment>
<proteinExistence type="inferred from homology"/>
<feature type="chain" id="PRO_0000457485" description="FIS1-related protein fis-2">
    <location>
        <begin position="1"/>
        <end position="151"/>
    </location>
</feature>
<feature type="transmembrane region" description="Helical" evidence="2">
    <location>
        <begin position="126"/>
        <end position="146"/>
    </location>
</feature>
<dbReference type="EMBL" id="BX284606">
    <property type="protein sequence ID" value="CCD69413.1"/>
    <property type="molecule type" value="Genomic_DNA"/>
</dbReference>
<dbReference type="RefSeq" id="NP_001024560.1">
    <property type="nucleotide sequence ID" value="NM_001029389.7"/>
</dbReference>
<dbReference type="SMR" id="Q6AHP8"/>
<dbReference type="FunCoup" id="Q6AHP8">
    <property type="interactions" value="2083"/>
</dbReference>
<dbReference type="STRING" id="6239.F13B9.8b.1"/>
<dbReference type="PaxDb" id="6239-F13B9.8b"/>
<dbReference type="PeptideAtlas" id="Q6AHP8"/>
<dbReference type="EnsemblMetazoa" id="F13B9.8.1">
    <property type="protein sequence ID" value="F13B9.8.1"/>
    <property type="gene ID" value="WBGene00001425"/>
</dbReference>
<dbReference type="GeneID" id="184409"/>
<dbReference type="KEGG" id="cel:CELE_F13B9.8"/>
<dbReference type="UCSC" id="F13B9.8b">
    <property type="organism name" value="c. elegans"/>
</dbReference>
<dbReference type="AGR" id="WB:WBGene00001425"/>
<dbReference type="CTD" id="184409"/>
<dbReference type="WormBase" id="F13B9.8">
    <property type="protein sequence ID" value="CE37102"/>
    <property type="gene ID" value="WBGene00001425"/>
    <property type="gene designation" value="fis-2"/>
</dbReference>
<dbReference type="eggNOG" id="KOG3364">
    <property type="taxonomic scope" value="Eukaryota"/>
</dbReference>
<dbReference type="GeneTree" id="ENSGT00390000000592"/>
<dbReference type="InParanoid" id="Q6AHP8"/>
<dbReference type="OMA" id="DGYIGMG"/>
<dbReference type="OrthoDB" id="421154at2759"/>
<dbReference type="PhylomeDB" id="Q6AHP8"/>
<dbReference type="Reactome" id="R-CEL-9603798">
    <property type="pathway name" value="Class I peroxisomal membrane protein import"/>
</dbReference>
<dbReference type="PRO" id="PR:Q6AHP8"/>
<dbReference type="Proteomes" id="UP000001940">
    <property type="component" value="Chromosome X"/>
</dbReference>
<dbReference type="Bgee" id="WBGene00001425">
    <property type="expression patterns" value="Expressed in embryo and 4 other cell types or tissues"/>
</dbReference>
<dbReference type="GO" id="GO:0005741">
    <property type="term" value="C:mitochondrial outer membrane"/>
    <property type="evidence" value="ECO:0000318"/>
    <property type="project" value="GO_Central"/>
</dbReference>
<dbReference type="GO" id="GO:0005739">
    <property type="term" value="C:mitochondrion"/>
    <property type="evidence" value="ECO:0000314"/>
    <property type="project" value="WormBase"/>
</dbReference>
<dbReference type="GO" id="GO:0005778">
    <property type="term" value="C:peroxisomal membrane"/>
    <property type="evidence" value="ECO:0000318"/>
    <property type="project" value="GO_Central"/>
</dbReference>
<dbReference type="GO" id="GO:0008289">
    <property type="term" value="F:lipid binding"/>
    <property type="evidence" value="ECO:0000318"/>
    <property type="project" value="GO_Central"/>
</dbReference>
<dbReference type="GO" id="GO:0060090">
    <property type="term" value="F:molecular adaptor activity"/>
    <property type="evidence" value="ECO:0000318"/>
    <property type="project" value="GO_Central"/>
</dbReference>
<dbReference type="GO" id="GO:0006915">
    <property type="term" value="P:apoptotic process"/>
    <property type="evidence" value="ECO:0000316"/>
    <property type="project" value="WormBase"/>
</dbReference>
<dbReference type="GO" id="GO:0036498">
    <property type="term" value="P:IRE1-mediated unfolded protein response"/>
    <property type="evidence" value="ECO:0007007"/>
    <property type="project" value="WormBase"/>
</dbReference>
<dbReference type="GO" id="GO:0000266">
    <property type="term" value="P:mitochondrial fission"/>
    <property type="evidence" value="ECO:0000318"/>
    <property type="project" value="GO_Central"/>
</dbReference>
<dbReference type="GO" id="GO:0016559">
    <property type="term" value="P:peroxisome fission"/>
    <property type="evidence" value="ECO:0000318"/>
    <property type="project" value="GO_Central"/>
</dbReference>
<dbReference type="CDD" id="cd12212">
    <property type="entry name" value="Fis1"/>
    <property type="match status" value="1"/>
</dbReference>
<dbReference type="FunFam" id="1.25.40.10:FF:000147">
    <property type="entry name" value="Mitochondrial fission 1 protein"/>
    <property type="match status" value="1"/>
</dbReference>
<dbReference type="Gene3D" id="1.25.40.10">
    <property type="entry name" value="Tetratricopeptide repeat domain"/>
    <property type="match status" value="1"/>
</dbReference>
<dbReference type="InterPro" id="IPR016543">
    <property type="entry name" value="Fis1"/>
</dbReference>
<dbReference type="InterPro" id="IPR033745">
    <property type="entry name" value="Fis1_cytosol"/>
</dbReference>
<dbReference type="InterPro" id="IPR028061">
    <property type="entry name" value="Fis1_TPR_C"/>
</dbReference>
<dbReference type="InterPro" id="IPR028058">
    <property type="entry name" value="Fis1_TPR_N"/>
</dbReference>
<dbReference type="InterPro" id="IPR011990">
    <property type="entry name" value="TPR-like_helical_dom_sf"/>
</dbReference>
<dbReference type="PANTHER" id="PTHR13247:SF0">
    <property type="entry name" value="MITOCHONDRIAL FISSION 1 PROTEIN"/>
    <property type="match status" value="1"/>
</dbReference>
<dbReference type="PANTHER" id="PTHR13247">
    <property type="entry name" value="TETRATRICOPEPTIDE REPEAT PROTEIN 11 TPR REPEAT PROTEIN 11"/>
    <property type="match status" value="1"/>
</dbReference>
<dbReference type="Pfam" id="PF14853">
    <property type="entry name" value="Fis1_TPR_C"/>
    <property type="match status" value="1"/>
</dbReference>
<dbReference type="Pfam" id="PF14852">
    <property type="entry name" value="Fis1_TPR_N"/>
    <property type="match status" value="1"/>
</dbReference>
<dbReference type="PIRSF" id="PIRSF008835">
    <property type="entry name" value="TPR_repeat_11_Fis1"/>
    <property type="match status" value="1"/>
</dbReference>
<dbReference type="SUPFAM" id="SSF48452">
    <property type="entry name" value="TPR-like"/>
    <property type="match status" value="1"/>
</dbReference>
<accession>Q6AHP8</accession>
<gene>
    <name evidence="8" type="primary">fis-2</name>
    <name evidence="8" type="ORF">F13B9.8</name>
</gene>
<keyword id="KW-0053">Apoptosis</keyword>
<keyword id="KW-0472">Membrane</keyword>
<keyword id="KW-0496">Mitochondrion</keyword>
<keyword id="KW-1000">Mitochondrion outer membrane</keyword>
<keyword id="KW-0576">Peroxisome</keyword>
<keyword id="KW-1185">Reference proteome</keyword>
<keyword id="KW-0812">Transmembrane</keyword>
<keyword id="KW-1133">Transmembrane helix</keyword>
<protein>
    <recommendedName>
        <fullName evidence="8">FIS1-related protein fis-2</fullName>
    </recommendedName>
    <alternativeName>
        <fullName evidence="3">Mitochondrial fission 1 protein fis-2</fullName>
    </alternativeName>
</protein>
<organism evidence="7">
    <name type="scientific">Caenorhabditis elegans</name>
    <dbReference type="NCBI Taxonomy" id="6239"/>
    <lineage>
        <taxon>Eukaryota</taxon>
        <taxon>Metazoa</taxon>
        <taxon>Ecdysozoa</taxon>
        <taxon>Nematoda</taxon>
        <taxon>Chromadorea</taxon>
        <taxon>Rhabditida</taxon>
        <taxon>Rhabditina</taxon>
        <taxon>Rhabditomorpha</taxon>
        <taxon>Rhabditoidea</taxon>
        <taxon>Rhabditidae</taxon>
        <taxon>Peloderinae</taxon>
        <taxon>Caenorhabditis</taxon>
    </lineage>
</organism>
<name>FIS12_CAEEL</name>
<reference evidence="7" key="1">
    <citation type="journal article" date="1998" name="Science">
        <title>Genome sequence of the nematode C. elegans: a platform for investigating biology.</title>
        <authorList>
            <consortium name="The C. elegans sequencing consortium"/>
        </authorList>
    </citation>
    <scope>NUCLEOTIDE SEQUENCE [LARGE SCALE GENOMIC DNA]</scope>
    <source>
        <strain evidence="7">Bristol N2</strain>
    </source>
</reference>
<reference evidence="6" key="2">
    <citation type="journal article" date="2008" name="Mol. Cell">
        <title>Caenorhabditis elegans drp-1 and fis-2 regulate distinct cell-death execution pathways downstream of ced-3 and independent of ced-9.</title>
        <authorList>
            <person name="Breckenridge D.G."/>
            <person name="Kang B.H."/>
            <person name="Kokel D."/>
            <person name="Mitani S."/>
            <person name="Staehelin L.A."/>
            <person name="Xue D."/>
        </authorList>
    </citation>
    <scope>FUNCTION</scope>
    <scope>SUBCELLULAR LOCATION</scope>
    <scope>DISRUPTION PHENOTYPE</scope>
</reference>
<reference evidence="6" key="3">
    <citation type="journal article" date="2014" name="Mol. Biol. Cell">
        <title>Mutations in Fis1 disrupt orderly disposal of defective mitochondria.</title>
        <authorList>
            <person name="Shen Q."/>
            <person name="Yamano K."/>
            <person name="Head B.P."/>
            <person name="Kawajiri S."/>
            <person name="Cheung J.T."/>
            <person name="Wang C."/>
            <person name="Cho J.H."/>
            <person name="Hattori N."/>
            <person name="Youle R.J."/>
            <person name="van der Bliek A.M."/>
        </authorList>
    </citation>
    <scope>FUNCTION</scope>
</reference>
<sequence>MDYGTILEERTNPAVLMNAREQYMRQCARGDPSAASTFAFAHAMIGSKNKLDVKEGIVCLEKLLRDDEDRTSKRNYVYYLAVAHARIKQYDLALGYIDVLLDAEGDNQQAKTLKESIKSAMTHDGLIGAAIVGGGALALAGLVAIFSMSRK</sequence>
<evidence type="ECO:0000250" key="1">
    <source>
        <dbReference type="UniProtKB" id="Q9Y3D6"/>
    </source>
</evidence>
<evidence type="ECO:0000255" key="2"/>
<evidence type="ECO:0000255" key="3">
    <source>
        <dbReference type="PIRNR" id="PIRNR008835"/>
    </source>
</evidence>
<evidence type="ECO:0000269" key="4">
    <source>
    </source>
</evidence>
<evidence type="ECO:0000269" key="5">
    <source>
    </source>
</evidence>
<evidence type="ECO:0000305" key="6"/>
<evidence type="ECO:0000312" key="7">
    <source>
        <dbReference type="Proteomes" id="UP000001940"/>
    </source>
</evidence>
<evidence type="ECO:0000312" key="8">
    <source>
        <dbReference type="WormBase" id="F13B9.8"/>
    </source>
</evidence>